<proteinExistence type="inferred from homology"/>
<protein>
    <recommendedName>
        <fullName evidence="1">Aspartate--tRNA ligase</fullName>
        <ecNumber evidence="1">6.1.1.12</ecNumber>
    </recommendedName>
    <alternativeName>
        <fullName evidence="1">Aspartyl-tRNA synthetase</fullName>
        <shortName evidence="1">AspRS</shortName>
    </alternativeName>
</protein>
<dbReference type="EC" id="6.1.1.12" evidence="1"/>
<dbReference type="EMBL" id="AE017262">
    <property type="protein sequence ID" value="AAT04313.1"/>
    <property type="molecule type" value="Genomic_DNA"/>
</dbReference>
<dbReference type="RefSeq" id="WP_010958907.1">
    <property type="nucleotide sequence ID" value="NC_002973.6"/>
</dbReference>
<dbReference type="SMR" id="Q71ZF1"/>
<dbReference type="KEGG" id="lmf:LMOf2365_1538"/>
<dbReference type="HOGENOM" id="CLU_014330_3_2_9"/>
<dbReference type="GO" id="GO:0005737">
    <property type="term" value="C:cytoplasm"/>
    <property type="evidence" value="ECO:0007669"/>
    <property type="project" value="UniProtKB-SubCell"/>
</dbReference>
<dbReference type="GO" id="GO:0004815">
    <property type="term" value="F:aspartate-tRNA ligase activity"/>
    <property type="evidence" value="ECO:0007669"/>
    <property type="project" value="UniProtKB-UniRule"/>
</dbReference>
<dbReference type="GO" id="GO:0005524">
    <property type="term" value="F:ATP binding"/>
    <property type="evidence" value="ECO:0007669"/>
    <property type="project" value="UniProtKB-UniRule"/>
</dbReference>
<dbReference type="GO" id="GO:0140096">
    <property type="term" value="F:catalytic activity, acting on a protein"/>
    <property type="evidence" value="ECO:0007669"/>
    <property type="project" value="UniProtKB-ARBA"/>
</dbReference>
<dbReference type="GO" id="GO:0003676">
    <property type="term" value="F:nucleic acid binding"/>
    <property type="evidence" value="ECO:0007669"/>
    <property type="project" value="InterPro"/>
</dbReference>
<dbReference type="GO" id="GO:0016740">
    <property type="term" value="F:transferase activity"/>
    <property type="evidence" value="ECO:0007669"/>
    <property type="project" value="UniProtKB-ARBA"/>
</dbReference>
<dbReference type="GO" id="GO:0006422">
    <property type="term" value="P:aspartyl-tRNA aminoacylation"/>
    <property type="evidence" value="ECO:0007669"/>
    <property type="project" value="UniProtKB-UniRule"/>
</dbReference>
<dbReference type="CDD" id="cd00777">
    <property type="entry name" value="AspRS_core"/>
    <property type="match status" value="1"/>
</dbReference>
<dbReference type="CDD" id="cd04317">
    <property type="entry name" value="EcAspRS_like_N"/>
    <property type="match status" value="1"/>
</dbReference>
<dbReference type="Gene3D" id="3.30.930.10">
    <property type="entry name" value="Bira Bifunctional Protein, Domain 2"/>
    <property type="match status" value="1"/>
</dbReference>
<dbReference type="Gene3D" id="3.30.1360.30">
    <property type="entry name" value="GAD-like domain"/>
    <property type="match status" value="1"/>
</dbReference>
<dbReference type="Gene3D" id="2.40.50.140">
    <property type="entry name" value="Nucleic acid-binding proteins"/>
    <property type="match status" value="1"/>
</dbReference>
<dbReference type="HAMAP" id="MF_00044">
    <property type="entry name" value="Asp_tRNA_synth_type1"/>
    <property type="match status" value="1"/>
</dbReference>
<dbReference type="InterPro" id="IPR004364">
    <property type="entry name" value="Aa-tRNA-synt_II"/>
</dbReference>
<dbReference type="InterPro" id="IPR006195">
    <property type="entry name" value="aa-tRNA-synth_II"/>
</dbReference>
<dbReference type="InterPro" id="IPR045864">
    <property type="entry name" value="aa-tRNA-synth_II/BPL/LPL"/>
</dbReference>
<dbReference type="InterPro" id="IPR004524">
    <property type="entry name" value="Asp-tRNA-ligase_1"/>
</dbReference>
<dbReference type="InterPro" id="IPR047089">
    <property type="entry name" value="Asp-tRNA-ligase_1_N"/>
</dbReference>
<dbReference type="InterPro" id="IPR002312">
    <property type="entry name" value="Asp/Asn-tRNA-synth_IIb"/>
</dbReference>
<dbReference type="InterPro" id="IPR047090">
    <property type="entry name" value="AspRS_core"/>
</dbReference>
<dbReference type="InterPro" id="IPR004115">
    <property type="entry name" value="GAD-like_sf"/>
</dbReference>
<dbReference type="InterPro" id="IPR029351">
    <property type="entry name" value="GAD_dom"/>
</dbReference>
<dbReference type="InterPro" id="IPR012340">
    <property type="entry name" value="NA-bd_OB-fold"/>
</dbReference>
<dbReference type="InterPro" id="IPR004365">
    <property type="entry name" value="NA-bd_OB_tRNA"/>
</dbReference>
<dbReference type="NCBIfam" id="TIGR00459">
    <property type="entry name" value="aspS_bact"/>
    <property type="match status" value="1"/>
</dbReference>
<dbReference type="NCBIfam" id="NF001750">
    <property type="entry name" value="PRK00476.1"/>
    <property type="match status" value="1"/>
</dbReference>
<dbReference type="PANTHER" id="PTHR22594:SF5">
    <property type="entry name" value="ASPARTATE--TRNA LIGASE, MITOCHONDRIAL"/>
    <property type="match status" value="1"/>
</dbReference>
<dbReference type="PANTHER" id="PTHR22594">
    <property type="entry name" value="ASPARTYL/LYSYL-TRNA SYNTHETASE"/>
    <property type="match status" value="1"/>
</dbReference>
<dbReference type="Pfam" id="PF02938">
    <property type="entry name" value="GAD"/>
    <property type="match status" value="1"/>
</dbReference>
<dbReference type="Pfam" id="PF00152">
    <property type="entry name" value="tRNA-synt_2"/>
    <property type="match status" value="1"/>
</dbReference>
<dbReference type="Pfam" id="PF01336">
    <property type="entry name" value="tRNA_anti-codon"/>
    <property type="match status" value="1"/>
</dbReference>
<dbReference type="PRINTS" id="PR01042">
    <property type="entry name" value="TRNASYNTHASP"/>
</dbReference>
<dbReference type="SUPFAM" id="SSF55681">
    <property type="entry name" value="Class II aaRS and biotin synthetases"/>
    <property type="match status" value="1"/>
</dbReference>
<dbReference type="SUPFAM" id="SSF55261">
    <property type="entry name" value="GAD domain-like"/>
    <property type="match status" value="1"/>
</dbReference>
<dbReference type="SUPFAM" id="SSF50249">
    <property type="entry name" value="Nucleic acid-binding proteins"/>
    <property type="match status" value="1"/>
</dbReference>
<dbReference type="PROSITE" id="PS50862">
    <property type="entry name" value="AA_TRNA_LIGASE_II"/>
    <property type="match status" value="1"/>
</dbReference>
<name>SYD_LISMF</name>
<comment type="function">
    <text evidence="1">Catalyzes the attachment of L-aspartate to tRNA(Asp) in a two-step reaction: L-aspartate is first activated by ATP to form Asp-AMP and then transferred to the acceptor end of tRNA(Asp).</text>
</comment>
<comment type="catalytic activity">
    <reaction evidence="1">
        <text>tRNA(Asp) + L-aspartate + ATP = L-aspartyl-tRNA(Asp) + AMP + diphosphate</text>
        <dbReference type="Rhea" id="RHEA:19649"/>
        <dbReference type="Rhea" id="RHEA-COMP:9660"/>
        <dbReference type="Rhea" id="RHEA-COMP:9678"/>
        <dbReference type="ChEBI" id="CHEBI:29991"/>
        <dbReference type="ChEBI" id="CHEBI:30616"/>
        <dbReference type="ChEBI" id="CHEBI:33019"/>
        <dbReference type="ChEBI" id="CHEBI:78442"/>
        <dbReference type="ChEBI" id="CHEBI:78516"/>
        <dbReference type="ChEBI" id="CHEBI:456215"/>
        <dbReference type="EC" id="6.1.1.12"/>
    </reaction>
</comment>
<comment type="subunit">
    <text evidence="1">Homodimer.</text>
</comment>
<comment type="subcellular location">
    <subcellularLocation>
        <location evidence="1">Cytoplasm</location>
    </subcellularLocation>
</comment>
<comment type="similarity">
    <text evidence="1">Belongs to the class-II aminoacyl-tRNA synthetase family. Type 1 subfamily.</text>
</comment>
<reference key="1">
    <citation type="journal article" date="2004" name="Nucleic Acids Res.">
        <title>Whole genome comparisons of serotype 4b and 1/2a strains of the food-borne pathogen Listeria monocytogenes reveal new insights into the core genome components of this species.</title>
        <authorList>
            <person name="Nelson K.E."/>
            <person name="Fouts D.E."/>
            <person name="Mongodin E.F."/>
            <person name="Ravel J."/>
            <person name="DeBoy R.T."/>
            <person name="Kolonay J.F."/>
            <person name="Rasko D.A."/>
            <person name="Angiuoli S.V."/>
            <person name="Gill S.R."/>
            <person name="Paulsen I.T."/>
            <person name="Peterson J.D."/>
            <person name="White O."/>
            <person name="Nelson W.C."/>
            <person name="Nierman W.C."/>
            <person name="Beanan M.J."/>
            <person name="Brinkac L.M."/>
            <person name="Daugherty S.C."/>
            <person name="Dodson R.J."/>
            <person name="Durkin A.S."/>
            <person name="Madupu R."/>
            <person name="Haft D.H."/>
            <person name="Selengut J."/>
            <person name="Van Aken S.E."/>
            <person name="Khouri H.M."/>
            <person name="Fedorova N."/>
            <person name="Forberger H.A."/>
            <person name="Tran B."/>
            <person name="Kathariou S."/>
            <person name="Wonderling L.D."/>
            <person name="Uhlich G.A."/>
            <person name="Bayles D.O."/>
            <person name="Luchansky J.B."/>
            <person name="Fraser C.M."/>
        </authorList>
    </citation>
    <scope>NUCLEOTIDE SEQUENCE [LARGE SCALE GENOMIC DNA]</scope>
    <source>
        <strain>F2365</strain>
    </source>
</reference>
<gene>
    <name evidence="1" type="primary">aspS</name>
    <name type="ordered locus">LMOf2365_1538</name>
</gene>
<evidence type="ECO:0000255" key="1">
    <source>
        <dbReference type="HAMAP-Rule" id="MF_00044"/>
    </source>
</evidence>
<accession>Q71ZF1</accession>
<organism>
    <name type="scientific">Listeria monocytogenes serotype 4b (strain F2365)</name>
    <dbReference type="NCBI Taxonomy" id="265669"/>
    <lineage>
        <taxon>Bacteria</taxon>
        <taxon>Bacillati</taxon>
        <taxon>Bacillota</taxon>
        <taxon>Bacilli</taxon>
        <taxon>Bacillales</taxon>
        <taxon>Listeriaceae</taxon>
        <taxon>Listeria</taxon>
    </lineage>
</organism>
<sequence>MEKRTSYCGELNEAHIGQSVVLHGWVQKRRDLGGLIFIDLRDREGIVQVVFNPEFSKEALEIADSVRNEFVVTIKGTVHARGEKAINDKLATGKVEVLAEEITILNTSKTPPFYIEDGVNVSDELRLKYRYLDLRRPEMNNIFKMRHTVTRTFRNKLDALGFFDIETPYLTKSTPEGARDYLVPSRVYPGNFYALPQSPQILKQLLMTAGFDKYYQIVRCFRDEDLRGDRQPEFTQIDLETSFLTKEEIQAITEDMLVDVVKEAKNITIDKPFPRMTYKEAMDRFGSDKPDIRFGLELVNVSDVVKDVDFKVFQSAIENGGEVKAINAKAAAANFSRKDLDALGVFVANYGAKGLAWLKVEAGELKGPIAKFFPEEKATELKASLQAEDGDLLLFAADKADIVAASLGALRNKLGKELNLINEEELAFLWVTDWPLFEYDEEAGRYVSAHHPFTLPKEEDIPLLETDSSKVMAEAYDIVLNGYEIGGGSLRIYKKEVQESMFRALGFTDESAKEQFGFLMDALEYGTPPHGGIALGLDRIVMILAGRNNLRDTIAFPKTGSAVDPLTNAPGEVSEAQLAELKLETVKKETN</sequence>
<keyword id="KW-0030">Aminoacyl-tRNA synthetase</keyword>
<keyword id="KW-0067">ATP-binding</keyword>
<keyword id="KW-0963">Cytoplasm</keyword>
<keyword id="KW-0436">Ligase</keyword>
<keyword id="KW-0547">Nucleotide-binding</keyword>
<keyword id="KW-0648">Protein biosynthesis</keyword>
<feature type="chain" id="PRO_0000110895" description="Aspartate--tRNA ligase">
    <location>
        <begin position="1"/>
        <end position="591"/>
    </location>
</feature>
<feature type="region of interest" description="Aspartate" evidence="1">
    <location>
        <begin position="200"/>
        <end position="203"/>
    </location>
</feature>
<feature type="binding site" evidence="1">
    <location>
        <position position="176"/>
    </location>
    <ligand>
        <name>L-aspartate</name>
        <dbReference type="ChEBI" id="CHEBI:29991"/>
    </ligand>
</feature>
<feature type="binding site" evidence="1">
    <location>
        <begin position="222"/>
        <end position="224"/>
    </location>
    <ligand>
        <name>ATP</name>
        <dbReference type="ChEBI" id="CHEBI:30616"/>
    </ligand>
</feature>
<feature type="binding site" evidence="1">
    <location>
        <position position="222"/>
    </location>
    <ligand>
        <name>L-aspartate</name>
        <dbReference type="ChEBI" id="CHEBI:29991"/>
    </ligand>
</feature>
<feature type="binding site" evidence="1">
    <location>
        <position position="231"/>
    </location>
    <ligand>
        <name>ATP</name>
        <dbReference type="ChEBI" id="CHEBI:30616"/>
    </ligand>
</feature>
<feature type="binding site" evidence="1">
    <location>
        <position position="450"/>
    </location>
    <ligand>
        <name>L-aspartate</name>
        <dbReference type="ChEBI" id="CHEBI:29991"/>
    </ligand>
</feature>
<feature type="binding site" evidence="1">
    <location>
        <position position="484"/>
    </location>
    <ligand>
        <name>ATP</name>
        <dbReference type="ChEBI" id="CHEBI:30616"/>
    </ligand>
</feature>
<feature type="binding site" evidence="1">
    <location>
        <position position="491"/>
    </location>
    <ligand>
        <name>L-aspartate</name>
        <dbReference type="ChEBI" id="CHEBI:29991"/>
    </ligand>
</feature>
<feature type="binding site" evidence="1">
    <location>
        <begin position="536"/>
        <end position="539"/>
    </location>
    <ligand>
        <name>ATP</name>
        <dbReference type="ChEBI" id="CHEBI:30616"/>
    </ligand>
</feature>